<protein>
    <recommendedName>
        <fullName evidence="1">A-type ATP synthase subunit B</fullName>
    </recommendedName>
</protein>
<comment type="function">
    <text evidence="1">Component of the A-type ATP synthase that produces ATP from ADP in the presence of a proton gradient across the membrane. The B chain is a regulatory subunit.</text>
</comment>
<comment type="subunit">
    <text evidence="1">Has multiple subunits with at least A(3), B(3), C, D, E, F, H, I and proteolipid K(x).</text>
</comment>
<comment type="subcellular location">
    <subcellularLocation>
        <location evidence="1">Cell membrane</location>
        <topology evidence="1">Peripheral membrane protein</topology>
    </subcellularLocation>
</comment>
<comment type="similarity">
    <text evidence="1">Belongs to the ATPase alpha/beta chains family.</text>
</comment>
<proteinExistence type="inferred from homology"/>
<accession>A9A2Q9</accession>
<evidence type="ECO:0000255" key="1">
    <source>
        <dbReference type="HAMAP-Rule" id="MF_00310"/>
    </source>
</evidence>
<keyword id="KW-0066">ATP synthesis</keyword>
<keyword id="KW-1003">Cell membrane</keyword>
<keyword id="KW-0375">Hydrogen ion transport</keyword>
<keyword id="KW-0406">Ion transport</keyword>
<keyword id="KW-0472">Membrane</keyword>
<keyword id="KW-1185">Reference proteome</keyword>
<keyword id="KW-0813">Transport</keyword>
<organism>
    <name type="scientific">Nitrosopumilus maritimus (strain SCM1)</name>
    <dbReference type="NCBI Taxonomy" id="436308"/>
    <lineage>
        <taxon>Archaea</taxon>
        <taxon>Nitrososphaerota</taxon>
        <taxon>Nitrososphaeria</taxon>
        <taxon>Nitrosopumilales</taxon>
        <taxon>Nitrosopumilaceae</taxon>
        <taxon>Nitrosopumilus</taxon>
    </lineage>
</organism>
<gene>
    <name evidence="1" type="primary">atpB</name>
    <name type="ordered locus">Nmar_1690</name>
</gene>
<reference key="1">
    <citation type="journal article" date="2010" name="Proc. Natl. Acad. Sci. U.S.A.">
        <title>Nitrosopumilus maritimus genome reveals unique mechanisms for nitrification and autotrophy in globally distributed marine crenarchaea.</title>
        <authorList>
            <person name="Walker C.B."/>
            <person name="de la Torre J.R."/>
            <person name="Klotz M.G."/>
            <person name="Urakawa H."/>
            <person name="Pinel N."/>
            <person name="Arp D.J."/>
            <person name="Brochier-Armanet C."/>
            <person name="Chain P.S."/>
            <person name="Chan P.P."/>
            <person name="Gollabgir A."/>
            <person name="Hemp J."/>
            <person name="Hugler M."/>
            <person name="Karr E.A."/>
            <person name="Konneke M."/>
            <person name="Shin M."/>
            <person name="Lawton T.J."/>
            <person name="Lowe T."/>
            <person name="Martens-Habbena W."/>
            <person name="Sayavedra-Soto L.A."/>
            <person name="Lang D."/>
            <person name="Sievert S.M."/>
            <person name="Rosenzweig A.C."/>
            <person name="Manning G."/>
            <person name="Stahl D.A."/>
        </authorList>
    </citation>
    <scope>NUCLEOTIDE SEQUENCE [LARGE SCALE GENOMIC DNA]</scope>
    <source>
        <strain>SCM1</strain>
    </source>
</reference>
<sequence length="461" mass="50670">MTAEGGVQYSKIAEIKGPLVIVDDVENAAFDELVEVETKDGERRLGKVLEVGNGKAIVQVFEGTTGLSIAATNAKFVGKVMEMPVSREVLGRVFDGLGRPKDGLPDPIADQFIDINGEPMNPEQREYPKDFIQTGVSVIDGMITLVRGQKLPIFSGSGMSHNLLAAQIARQASVIGTQDDFAVVFAAIGVQYSEAEYFRRSLEESGALKRSVLFLNTADDPAIERIITPRVALTVAEYLAFELGMHVLVILTDMTNYAEALREISAAREEVPGRKGYPGYLYTDLSTIYERAGKLNGKKGSVTQVPILSMPSDDITHPIPDLTGYITEGQIVLGRDLFRQGVYPPVNILMSLSRLMKDGIGEGSTRADHGEISNQVYDAYSRAQEVRALAGIVGKAGLTEIDLKYMDVGDVFENEFLSQATDENRTIEETLGILWKIVSKLPRNEITKIKDKYVDQYYKEE</sequence>
<name>AATB_NITMS</name>
<feature type="chain" id="PRO_1000115662" description="A-type ATP synthase subunit B">
    <location>
        <begin position="1"/>
        <end position="461"/>
    </location>
</feature>
<dbReference type="EMBL" id="CP000866">
    <property type="protein sequence ID" value="ABX13586.1"/>
    <property type="molecule type" value="Genomic_DNA"/>
</dbReference>
<dbReference type="RefSeq" id="WP_012216072.1">
    <property type="nucleotide sequence ID" value="NC_010085.1"/>
</dbReference>
<dbReference type="SMR" id="A9A2Q9"/>
<dbReference type="FunCoup" id="A9A2Q9">
    <property type="interactions" value="77"/>
</dbReference>
<dbReference type="STRING" id="436308.Nmar_1690"/>
<dbReference type="EnsemblBacteria" id="ABX13586">
    <property type="protein sequence ID" value="ABX13586"/>
    <property type="gene ID" value="Nmar_1690"/>
</dbReference>
<dbReference type="GeneID" id="5774425"/>
<dbReference type="KEGG" id="nmr:Nmar_1690"/>
<dbReference type="eggNOG" id="arCOG00865">
    <property type="taxonomic scope" value="Archaea"/>
</dbReference>
<dbReference type="HOGENOM" id="CLU_022916_0_0_2"/>
<dbReference type="InParanoid" id="A9A2Q9"/>
<dbReference type="OrthoDB" id="32941at2157"/>
<dbReference type="PhylomeDB" id="A9A2Q9"/>
<dbReference type="Proteomes" id="UP000000792">
    <property type="component" value="Chromosome"/>
</dbReference>
<dbReference type="GO" id="GO:0005886">
    <property type="term" value="C:plasma membrane"/>
    <property type="evidence" value="ECO:0007669"/>
    <property type="project" value="UniProtKB-SubCell"/>
</dbReference>
<dbReference type="GO" id="GO:0005524">
    <property type="term" value="F:ATP binding"/>
    <property type="evidence" value="ECO:0007669"/>
    <property type="project" value="UniProtKB-UniRule"/>
</dbReference>
<dbReference type="GO" id="GO:0046933">
    <property type="term" value="F:proton-transporting ATP synthase activity, rotational mechanism"/>
    <property type="evidence" value="ECO:0007669"/>
    <property type="project" value="UniProtKB-UniRule"/>
</dbReference>
<dbReference type="GO" id="GO:0046961">
    <property type="term" value="F:proton-transporting ATPase activity, rotational mechanism"/>
    <property type="evidence" value="ECO:0000318"/>
    <property type="project" value="GO_Central"/>
</dbReference>
<dbReference type="GO" id="GO:0042777">
    <property type="term" value="P:proton motive force-driven plasma membrane ATP synthesis"/>
    <property type="evidence" value="ECO:0007669"/>
    <property type="project" value="UniProtKB-UniRule"/>
</dbReference>
<dbReference type="CDD" id="cd18112">
    <property type="entry name" value="ATP-synt_V_A-type_beta_C"/>
    <property type="match status" value="1"/>
</dbReference>
<dbReference type="CDD" id="cd18118">
    <property type="entry name" value="ATP-synt_V_A-type_beta_N"/>
    <property type="match status" value="1"/>
</dbReference>
<dbReference type="CDD" id="cd01135">
    <property type="entry name" value="V_A-ATPase_B"/>
    <property type="match status" value="1"/>
</dbReference>
<dbReference type="Gene3D" id="3.40.50.12240">
    <property type="match status" value="1"/>
</dbReference>
<dbReference type="HAMAP" id="MF_00310">
    <property type="entry name" value="ATP_synth_B_arch"/>
    <property type="match status" value="1"/>
</dbReference>
<dbReference type="InterPro" id="IPR055190">
    <property type="entry name" value="ATP-synt_VA_C"/>
</dbReference>
<dbReference type="InterPro" id="IPR020003">
    <property type="entry name" value="ATPase_a/bsu_AS"/>
</dbReference>
<dbReference type="InterPro" id="IPR004100">
    <property type="entry name" value="ATPase_F1/V1/A1_a/bsu_N"/>
</dbReference>
<dbReference type="InterPro" id="IPR000194">
    <property type="entry name" value="ATPase_F1/V1/A1_a/bsu_nucl-bd"/>
</dbReference>
<dbReference type="InterPro" id="IPR027417">
    <property type="entry name" value="P-loop_NTPase"/>
</dbReference>
<dbReference type="InterPro" id="IPR022879">
    <property type="entry name" value="V-ATPase_su_B/beta"/>
</dbReference>
<dbReference type="NCBIfam" id="NF003235">
    <property type="entry name" value="PRK04196.1"/>
    <property type="match status" value="1"/>
</dbReference>
<dbReference type="PANTHER" id="PTHR43389">
    <property type="entry name" value="V-TYPE PROTON ATPASE SUBUNIT B"/>
    <property type="match status" value="1"/>
</dbReference>
<dbReference type="PANTHER" id="PTHR43389:SF4">
    <property type="entry name" value="V-TYPE PROTON ATPASE SUBUNIT B"/>
    <property type="match status" value="1"/>
</dbReference>
<dbReference type="Pfam" id="PF00006">
    <property type="entry name" value="ATP-synt_ab"/>
    <property type="match status" value="1"/>
</dbReference>
<dbReference type="Pfam" id="PF02874">
    <property type="entry name" value="ATP-synt_ab_N"/>
    <property type="match status" value="1"/>
</dbReference>
<dbReference type="Pfam" id="PF22919">
    <property type="entry name" value="ATP-synt_VA_C"/>
    <property type="match status" value="1"/>
</dbReference>
<dbReference type="PIRSF" id="PIRSF039114">
    <property type="entry name" value="V-ATPsynth_beta/V-ATPase_B"/>
    <property type="match status" value="1"/>
</dbReference>
<dbReference type="SUPFAM" id="SSF52540">
    <property type="entry name" value="P-loop containing nucleoside triphosphate hydrolases"/>
    <property type="match status" value="1"/>
</dbReference>
<dbReference type="PROSITE" id="PS00152">
    <property type="entry name" value="ATPASE_ALPHA_BETA"/>
    <property type="match status" value="1"/>
</dbReference>